<evidence type="ECO:0000255" key="1">
    <source>
        <dbReference type="HAMAP-Rule" id="MF_01079"/>
    </source>
</evidence>
<sequence>MKFFQEKISIKETNILLKVDNPKFFKMAKNTIINERLNLENYIFRNPIFLTSYSPVEVPDNVPEIVKLMAEAGFNADVGPMAAVAGTFSQLIVENLIENDCKNAISENGGDICLKCENDTTVGLYAGNSSLSGNLGFKLKKEKMKNGYGICTSSGTVGHSVSLGNADSVTVFSKSAIIADAAATSIGNFAVGIAVDAINNCLEKAENISKIDGVFVVIGEHAGKIGKIPQLIKTDKKEVLGNVFELV</sequence>
<gene>
    <name type="ordered locus">MmarC6_1437</name>
</gene>
<proteinExistence type="inferred from homology"/>
<comment type="similarity">
    <text evidence="1">Belongs to the UPF0280 family.</text>
</comment>
<dbReference type="EMBL" id="CP000867">
    <property type="protein sequence ID" value="ABX02250.1"/>
    <property type="molecule type" value="Genomic_DNA"/>
</dbReference>
<dbReference type="SMR" id="A9AA77"/>
<dbReference type="STRING" id="444158.MmarC6_1437"/>
<dbReference type="KEGG" id="mmx:MmarC6_1437"/>
<dbReference type="eggNOG" id="arCOG04376">
    <property type="taxonomic scope" value="Archaea"/>
</dbReference>
<dbReference type="HOGENOM" id="CLU_074757_0_0_2"/>
<dbReference type="OrthoDB" id="50299at2157"/>
<dbReference type="PhylomeDB" id="A9AA77"/>
<dbReference type="Gene3D" id="3.10.520.10">
    <property type="entry name" value="ApbE-like domains"/>
    <property type="match status" value="1"/>
</dbReference>
<dbReference type="HAMAP" id="MF_01079">
    <property type="entry name" value="UPF0280"/>
    <property type="match status" value="1"/>
</dbReference>
<dbReference type="InterPro" id="IPR003374">
    <property type="entry name" value="ApbE-like_sf"/>
</dbReference>
<dbReference type="InterPro" id="IPR037456">
    <property type="entry name" value="MA1715-like"/>
</dbReference>
<dbReference type="InterPro" id="IPR007183">
    <property type="entry name" value="UPF0280"/>
</dbReference>
<dbReference type="NCBIfam" id="NF003321">
    <property type="entry name" value="PRK04334.1-1"/>
    <property type="match status" value="1"/>
</dbReference>
<dbReference type="PIRSF" id="PIRSF006421">
    <property type="entry name" value="UCP006421"/>
    <property type="match status" value="1"/>
</dbReference>
<dbReference type="SUPFAM" id="SSF143631">
    <property type="entry name" value="ApbE-like"/>
    <property type="match status" value="1"/>
</dbReference>
<accession>A9AA77</accession>
<feature type="chain" id="PRO_0000366704" description="UPF0280 protein MmarC6_1437">
    <location>
        <begin position="1"/>
        <end position="247"/>
    </location>
</feature>
<name>Y1437_METM6</name>
<protein>
    <recommendedName>
        <fullName evidence="1">UPF0280 protein MmarC6_1437</fullName>
    </recommendedName>
</protein>
<reference key="1">
    <citation type="submission" date="2007-10" db="EMBL/GenBank/DDBJ databases">
        <title>Complete sequence of Methanococcus maripaludis C6.</title>
        <authorList>
            <consortium name="US DOE Joint Genome Institute"/>
            <person name="Copeland A."/>
            <person name="Lucas S."/>
            <person name="Lapidus A."/>
            <person name="Barry K."/>
            <person name="Glavina del Rio T."/>
            <person name="Dalin E."/>
            <person name="Tice H."/>
            <person name="Pitluck S."/>
            <person name="Clum A."/>
            <person name="Schmutz J."/>
            <person name="Larimer F."/>
            <person name="Land M."/>
            <person name="Hauser L."/>
            <person name="Kyrpides N."/>
            <person name="Mikhailova N."/>
            <person name="Sieprawska-Lupa M."/>
            <person name="Whitman W.B."/>
            <person name="Richardson P."/>
        </authorList>
    </citation>
    <scope>NUCLEOTIDE SEQUENCE [LARGE SCALE GENOMIC DNA]</scope>
    <source>
        <strain>C6 / ATCC BAA-1332</strain>
    </source>
</reference>
<organism>
    <name type="scientific">Methanococcus maripaludis (strain C6 / ATCC BAA-1332)</name>
    <dbReference type="NCBI Taxonomy" id="444158"/>
    <lineage>
        <taxon>Archaea</taxon>
        <taxon>Methanobacteriati</taxon>
        <taxon>Methanobacteriota</taxon>
        <taxon>Methanomada group</taxon>
        <taxon>Methanococci</taxon>
        <taxon>Methanococcales</taxon>
        <taxon>Methanococcaceae</taxon>
        <taxon>Methanococcus</taxon>
    </lineage>
</organism>